<keyword id="KW-0997">Cell inner membrane</keyword>
<keyword id="KW-1003">Cell membrane</keyword>
<keyword id="KW-0407">Ion channel</keyword>
<keyword id="KW-0406">Ion transport</keyword>
<keyword id="KW-0472">Membrane</keyword>
<keyword id="KW-0812">Transmembrane</keyword>
<keyword id="KW-1133">Transmembrane helix</keyword>
<keyword id="KW-0813">Transport</keyword>
<comment type="function">
    <text evidence="1">Channel that opens in response to stretch forces in the membrane lipid bilayer. May participate in the regulation of osmotic pressure changes within the cell.</text>
</comment>
<comment type="subunit">
    <text evidence="1">Homopentamer.</text>
</comment>
<comment type="subcellular location">
    <subcellularLocation>
        <location evidence="1">Cell inner membrane</location>
        <topology evidence="1">Multi-pass membrane protein</topology>
    </subcellularLocation>
</comment>
<comment type="similarity">
    <text evidence="1">Belongs to the MscL family.</text>
</comment>
<organism>
    <name type="scientific">Pseudomonas syringae pv. syringae (strain B728a)</name>
    <dbReference type="NCBI Taxonomy" id="205918"/>
    <lineage>
        <taxon>Bacteria</taxon>
        <taxon>Pseudomonadati</taxon>
        <taxon>Pseudomonadota</taxon>
        <taxon>Gammaproteobacteria</taxon>
        <taxon>Pseudomonadales</taxon>
        <taxon>Pseudomonadaceae</taxon>
        <taxon>Pseudomonas</taxon>
        <taxon>Pseudomonas syringae</taxon>
    </lineage>
</organism>
<accession>Q4ZNG6</accession>
<gene>
    <name evidence="1" type="primary">mscL</name>
    <name type="ordered locus">Psyr_4276</name>
</gene>
<proteinExistence type="inferred from homology"/>
<feature type="chain" id="PRO_0000238021" description="Large-conductance mechanosensitive channel">
    <location>
        <begin position="1"/>
        <end position="148"/>
    </location>
</feature>
<feature type="transmembrane region" description="Helical" evidence="1">
    <location>
        <begin position="9"/>
        <end position="29"/>
    </location>
</feature>
<feature type="transmembrane region" description="Helical" evidence="1">
    <location>
        <begin position="79"/>
        <end position="99"/>
    </location>
</feature>
<name>MSCL_PSEU2</name>
<protein>
    <recommendedName>
        <fullName evidence="1">Large-conductance mechanosensitive channel</fullName>
    </recommendedName>
</protein>
<dbReference type="EMBL" id="CP000075">
    <property type="protein sequence ID" value="AAY39306.1"/>
    <property type="molecule type" value="Genomic_DNA"/>
</dbReference>
<dbReference type="RefSeq" id="WP_003399960.1">
    <property type="nucleotide sequence ID" value="NC_007005.1"/>
</dbReference>
<dbReference type="RefSeq" id="YP_237344.1">
    <property type="nucleotide sequence ID" value="NC_007005.1"/>
</dbReference>
<dbReference type="SMR" id="Q4ZNG6"/>
<dbReference type="STRING" id="205918.Psyr_4276"/>
<dbReference type="KEGG" id="psb:Psyr_4276"/>
<dbReference type="PATRIC" id="fig|205918.7.peg.4412"/>
<dbReference type="eggNOG" id="COG1970">
    <property type="taxonomic scope" value="Bacteria"/>
</dbReference>
<dbReference type="HOGENOM" id="CLU_095787_0_0_6"/>
<dbReference type="OrthoDB" id="9810350at2"/>
<dbReference type="Proteomes" id="UP000000426">
    <property type="component" value="Chromosome"/>
</dbReference>
<dbReference type="GO" id="GO:0005886">
    <property type="term" value="C:plasma membrane"/>
    <property type="evidence" value="ECO:0007669"/>
    <property type="project" value="UniProtKB-SubCell"/>
</dbReference>
<dbReference type="GO" id="GO:0008381">
    <property type="term" value="F:mechanosensitive monoatomic ion channel activity"/>
    <property type="evidence" value="ECO:0007669"/>
    <property type="project" value="UniProtKB-UniRule"/>
</dbReference>
<dbReference type="FunFam" id="1.10.1200.120:FF:000001">
    <property type="entry name" value="Large-conductance mechanosensitive channel"/>
    <property type="match status" value="1"/>
</dbReference>
<dbReference type="Gene3D" id="1.10.1200.120">
    <property type="entry name" value="Large-conductance mechanosensitive channel, MscL, domain 1"/>
    <property type="match status" value="1"/>
</dbReference>
<dbReference type="HAMAP" id="MF_00115">
    <property type="entry name" value="MscL"/>
    <property type="match status" value="1"/>
</dbReference>
<dbReference type="InterPro" id="IPR019823">
    <property type="entry name" value="Mechanosensitive_channel_CS"/>
</dbReference>
<dbReference type="InterPro" id="IPR001185">
    <property type="entry name" value="MS_channel"/>
</dbReference>
<dbReference type="InterPro" id="IPR037673">
    <property type="entry name" value="MSC/AndL"/>
</dbReference>
<dbReference type="InterPro" id="IPR036019">
    <property type="entry name" value="MscL_channel"/>
</dbReference>
<dbReference type="NCBIfam" id="TIGR00220">
    <property type="entry name" value="mscL"/>
    <property type="match status" value="1"/>
</dbReference>
<dbReference type="NCBIfam" id="NF001843">
    <property type="entry name" value="PRK00567.1-4"/>
    <property type="match status" value="1"/>
</dbReference>
<dbReference type="PANTHER" id="PTHR30266:SF2">
    <property type="entry name" value="LARGE-CONDUCTANCE MECHANOSENSITIVE CHANNEL"/>
    <property type="match status" value="1"/>
</dbReference>
<dbReference type="PANTHER" id="PTHR30266">
    <property type="entry name" value="MECHANOSENSITIVE CHANNEL MSCL"/>
    <property type="match status" value="1"/>
</dbReference>
<dbReference type="Pfam" id="PF01741">
    <property type="entry name" value="MscL"/>
    <property type="match status" value="1"/>
</dbReference>
<dbReference type="PRINTS" id="PR01264">
    <property type="entry name" value="MECHCHANNEL"/>
</dbReference>
<dbReference type="SUPFAM" id="SSF81330">
    <property type="entry name" value="Gated mechanosensitive channel"/>
    <property type="match status" value="1"/>
</dbReference>
<dbReference type="PROSITE" id="PS01327">
    <property type="entry name" value="MSCL"/>
    <property type="match status" value="1"/>
</dbReference>
<reference key="1">
    <citation type="journal article" date="2005" name="Proc. Natl. Acad. Sci. U.S.A.">
        <title>Comparison of the complete genome sequences of Pseudomonas syringae pv. syringae B728a and pv. tomato DC3000.</title>
        <authorList>
            <person name="Feil H."/>
            <person name="Feil W.S."/>
            <person name="Chain P."/>
            <person name="Larimer F."/>
            <person name="Dibartolo G."/>
            <person name="Copeland A."/>
            <person name="Lykidis A."/>
            <person name="Trong S."/>
            <person name="Nolan M."/>
            <person name="Goltsman E."/>
            <person name="Thiel J."/>
            <person name="Malfatti S."/>
            <person name="Loper J.E."/>
            <person name="Lapidus A."/>
            <person name="Detter J.C."/>
            <person name="Land M."/>
            <person name="Richardson P.M."/>
            <person name="Kyrpides N.C."/>
            <person name="Ivanova N."/>
            <person name="Lindow S.E."/>
        </authorList>
    </citation>
    <scope>NUCLEOTIDE SEQUENCE [LARGE SCALE GENOMIC DNA]</scope>
    <source>
        <strain>B728a</strain>
    </source>
</reference>
<evidence type="ECO:0000255" key="1">
    <source>
        <dbReference type="HAMAP-Rule" id="MF_00115"/>
    </source>
</evidence>
<sequence>MSVLKEFKAFAVKGNVVDMAVGIIIGAAFGKIVSSFVGDVIMPPLGLLIGGVDFSDLAVTLRPAQGTAPAVLLAYGKFIQTVIDFIIVAFAIFMGVKAINRLKREEAKAPTLPPTPSKQEILLGEIRDLLKEQSKPAAPITVDPARTL</sequence>